<proteinExistence type="inferred from homology"/>
<gene>
    <name evidence="1" type="primary">dapB</name>
    <name type="ordered locus">SEN0065</name>
</gene>
<reference key="1">
    <citation type="journal article" date="2008" name="Genome Res.">
        <title>Comparative genome analysis of Salmonella enteritidis PT4 and Salmonella gallinarum 287/91 provides insights into evolutionary and host adaptation pathways.</title>
        <authorList>
            <person name="Thomson N.R."/>
            <person name="Clayton D.J."/>
            <person name="Windhorst D."/>
            <person name="Vernikos G."/>
            <person name="Davidson S."/>
            <person name="Churcher C."/>
            <person name="Quail M.A."/>
            <person name="Stevens M."/>
            <person name="Jones M.A."/>
            <person name="Watson M."/>
            <person name="Barron A."/>
            <person name="Layton A."/>
            <person name="Pickard D."/>
            <person name="Kingsley R.A."/>
            <person name="Bignell A."/>
            <person name="Clark L."/>
            <person name="Harris B."/>
            <person name="Ormond D."/>
            <person name="Abdellah Z."/>
            <person name="Brooks K."/>
            <person name="Cherevach I."/>
            <person name="Chillingworth T."/>
            <person name="Woodward J."/>
            <person name="Norberczak H."/>
            <person name="Lord A."/>
            <person name="Arrowsmith C."/>
            <person name="Jagels K."/>
            <person name="Moule S."/>
            <person name="Mungall K."/>
            <person name="Saunders M."/>
            <person name="Whitehead S."/>
            <person name="Chabalgoity J.A."/>
            <person name="Maskell D."/>
            <person name="Humphreys T."/>
            <person name="Roberts M."/>
            <person name="Barrow P.A."/>
            <person name="Dougan G."/>
            <person name="Parkhill J."/>
        </authorList>
    </citation>
    <scope>NUCLEOTIDE SEQUENCE [LARGE SCALE GENOMIC DNA]</scope>
    <source>
        <strain>P125109</strain>
    </source>
</reference>
<organism>
    <name type="scientific">Salmonella enteritidis PT4 (strain P125109)</name>
    <dbReference type="NCBI Taxonomy" id="550537"/>
    <lineage>
        <taxon>Bacteria</taxon>
        <taxon>Pseudomonadati</taxon>
        <taxon>Pseudomonadota</taxon>
        <taxon>Gammaproteobacteria</taxon>
        <taxon>Enterobacterales</taxon>
        <taxon>Enterobacteriaceae</taxon>
        <taxon>Salmonella</taxon>
    </lineage>
</organism>
<feature type="chain" id="PRO_1000093996" description="4-hydroxy-tetrahydrodipicolinate reductase">
    <location>
        <begin position="1"/>
        <end position="273"/>
    </location>
</feature>
<feature type="active site" description="Proton donor/acceptor" evidence="1">
    <location>
        <position position="159"/>
    </location>
</feature>
<feature type="active site" description="Proton donor" evidence="1">
    <location>
        <position position="163"/>
    </location>
</feature>
<feature type="binding site" evidence="1">
    <location>
        <begin position="12"/>
        <end position="17"/>
    </location>
    <ligand>
        <name>NAD(+)</name>
        <dbReference type="ChEBI" id="CHEBI:57540"/>
    </ligand>
</feature>
<feature type="binding site" evidence="1">
    <location>
        <position position="38"/>
    </location>
    <ligand>
        <name>NAD(+)</name>
        <dbReference type="ChEBI" id="CHEBI:57540"/>
    </ligand>
</feature>
<feature type="binding site" evidence="1">
    <location>
        <position position="39"/>
    </location>
    <ligand>
        <name>NADP(+)</name>
        <dbReference type="ChEBI" id="CHEBI:58349"/>
    </ligand>
</feature>
<feature type="binding site" evidence="1">
    <location>
        <begin position="102"/>
        <end position="104"/>
    </location>
    <ligand>
        <name>NAD(+)</name>
        <dbReference type="ChEBI" id="CHEBI:57540"/>
    </ligand>
</feature>
<feature type="binding site" evidence="1">
    <location>
        <begin position="126"/>
        <end position="129"/>
    </location>
    <ligand>
        <name>NAD(+)</name>
        <dbReference type="ChEBI" id="CHEBI:57540"/>
    </ligand>
</feature>
<feature type="binding site" evidence="1">
    <location>
        <position position="160"/>
    </location>
    <ligand>
        <name>(S)-2,3,4,5-tetrahydrodipicolinate</name>
        <dbReference type="ChEBI" id="CHEBI:16845"/>
    </ligand>
</feature>
<feature type="binding site" evidence="1">
    <location>
        <begin position="169"/>
        <end position="170"/>
    </location>
    <ligand>
        <name>(S)-2,3,4,5-tetrahydrodipicolinate</name>
        <dbReference type="ChEBI" id="CHEBI:16845"/>
    </ligand>
</feature>
<keyword id="KW-0028">Amino-acid biosynthesis</keyword>
<keyword id="KW-0963">Cytoplasm</keyword>
<keyword id="KW-0220">Diaminopimelate biosynthesis</keyword>
<keyword id="KW-0457">Lysine biosynthesis</keyword>
<keyword id="KW-0520">NAD</keyword>
<keyword id="KW-0521">NADP</keyword>
<keyword id="KW-0560">Oxidoreductase</keyword>
<name>DAPB_SALEP</name>
<dbReference type="EC" id="1.17.1.8" evidence="1"/>
<dbReference type="EMBL" id="AM933172">
    <property type="protein sequence ID" value="CAR31655.1"/>
    <property type="molecule type" value="Genomic_DNA"/>
</dbReference>
<dbReference type="RefSeq" id="WP_000544036.1">
    <property type="nucleotide sequence ID" value="NC_011294.1"/>
</dbReference>
<dbReference type="SMR" id="B5R1Q4"/>
<dbReference type="KEGG" id="set:SEN0065"/>
<dbReference type="HOGENOM" id="CLU_047479_2_1_6"/>
<dbReference type="UniPathway" id="UPA00034">
    <property type="reaction ID" value="UER00018"/>
</dbReference>
<dbReference type="Proteomes" id="UP000000613">
    <property type="component" value="Chromosome"/>
</dbReference>
<dbReference type="GO" id="GO:0005829">
    <property type="term" value="C:cytosol"/>
    <property type="evidence" value="ECO:0007669"/>
    <property type="project" value="TreeGrafter"/>
</dbReference>
<dbReference type="GO" id="GO:0008839">
    <property type="term" value="F:4-hydroxy-tetrahydrodipicolinate reductase"/>
    <property type="evidence" value="ECO:0007669"/>
    <property type="project" value="UniProtKB-EC"/>
</dbReference>
<dbReference type="GO" id="GO:0051287">
    <property type="term" value="F:NAD binding"/>
    <property type="evidence" value="ECO:0007669"/>
    <property type="project" value="UniProtKB-UniRule"/>
</dbReference>
<dbReference type="GO" id="GO:0050661">
    <property type="term" value="F:NADP binding"/>
    <property type="evidence" value="ECO:0007669"/>
    <property type="project" value="UniProtKB-UniRule"/>
</dbReference>
<dbReference type="GO" id="GO:0016726">
    <property type="term" value="F:oxidoreductase activity, acting on CH or CH2 groups, NAD or NADP as acceptor"/>
    <property type="evidence" value="ECO:0007669"/>
    <property type="project" value="UniProtKB-UniRule"/>
</dbReference>
<dbReference type="GO" id="GO:0019877">
    <property type="term" value="P:diaminopimelate biosynthetic process"/>
    <property type="evidence" value="ECO:0007669"/>
    <property type="project" value="UniProtKB-UniRule"/>
</dbReference>
<dbReference type="GO" id="GO:0009089">
    <property type="term" value="P:lysine biosynthetic process via diaminopimelate"/>
    <property type="evidence" value="ECO:0007669"/>
    <property type="project" value="UniProtKB-UniRule"/>
</dbReference>
<dbReference type="CDD" id="cd02274">
    <property type="entry name" value="DHDPR_N"/>
    <property type="match status" value="1"/>
</dbReference>
<dbReference type="FunFam" id="3.30.360.10:FF:000004">
    <property type="entry name" value="4-hydroxy-tetrahydrodipicolinate reductase"/>
    <property type="match status" value="1"/>
</dbReference>
<dbReference type="FunFam" id="3.40.50.720:FF:000048">
    <property type="entry name" value="4-hydroxy-tetrahydrodipicolinate reductase"/>
    <property type="match status" value="1"/>
</dbReference>
<dbReference type="Gene3D" id="3.30.360.10">
    <property type="entry name" value="Dihydrodipicolinate Reductase, domain 2"/>
    <property type="match status" value="1"/>
</dbReference>
<dbReference type="Gene3D" id="3.40.50.720">
    <property type="entry name" value="NAD(P)-binding Rossmann-like Domain"/>
    <property type="match status" value="1"/>
</dbReference>
<dbReference type="HAMAP" id="MF_00102">
    <property type="entry name" value="DapB"/>
    <property type="match status" value="1"/>
</dbReference>
<dbReference type="InterPro" id="IPR022663">
    <property type="entry name" value="DapB_C"/>
</dbReference>
<dbReference type="InterPro" id="IPR000846">
    <property type="entry name" value="DapB_N"/>
</dbReference>
<dbReference type="InterPro" id="IPR022664">
    <property type="entry name" value="DapB_N_CS"/>
</dbReference>
<dbReference type="InterPro" id="IPR023940">
    <property type="entry name" value="DHDPR_bac"/>
</dbReference>
<dbReference type="InterPro" id="IPR036291">
    <property type="entry name" value="NAD(P)-bd_dom_sf"/>
</dbReference>
<dbReference type="NCBIfam" id="TIGR00036">
    <property type="entry name" value="dapB"/>
    <property type="match status" value="1"/>
</dbReference>
<dbReference type="PANTHER" id="PTHR20836:SF0">
    <property type="entry name" value="4-HYDROXY-TETRAHYDRODIPICOLINATE REDUCTASE 1, CHLOROPLASTIC-RELATED"/>
    <property type="match status" value="1"/>
</dbReference>
<dbReference type="PANTHER" id="PTHR20836">
    <property type="entry name" value="DIHYDRODIPICOLINATE REDUCTASE"/>
    <property type="match status" value="1"/>
</dbReference>
<dbReference type="Pfam" id="PF05173">
    <property type="entry name" value="DapB_C"/>
    <property type="match status" value="1"/>
</dbReference>
<dbReference type="Pfam" id="PF01113">
    <property type="entry name" value="DapB_N"/>
    <property type="match status" value="1"/>
</dbReference>
<dbReference type="PIRSF" id="PIRSF000161">
    <property type="entry name" value="DHPR"/>
    <property type="match status" value="1"/>
</dbReference>
<dbReference type="SUPFAM" id="SSF55347">
    <property type="entry name" value="Glyceraldehyde-3-phosphate dehydrogenase-like, C-terminal domain"/>
    <property type="match status" value="1"/>
</dbReference>
<dbReference type="SUPFAM" id="SSF51735">
    <property type="entry name" value="NAD(P)-binding Rossmann-fold domains"/>
    <property type="match status" value="1"/>
</dbReference>
<dbReference type="PROSITE" id="PS01298">
    <property type="entry name" value="DAPB"/>
    <property type="match status" value="1"/>
</dbReference>
<comment type="function">
    <text evidence="1">Catalyzes the conversion of 4-hydroxy-tetrahydrodipicolinate (HTPA) to tetrahydrodipicolinate.</text>
</comment>
<comment type="catalytic activity">
    <reaction evidence="1">
        <text>(S)-2,3,4,5-tetrahydrodipicolinate + NAD(+) + H2O = (2S,4S)-4-hydroxy-2,3,4,5-tetrahydrodipicolinate + NADH + H(+)</text>
        <dbReference type="Rhea" id="RHEA:35323"/>
        <dbReference type="ChEBI" id="CHEBI:15377"/>
        <dbReference type="ChEBI" id="CHEBI:15378"/>
        <dbReference type="ChEBI" id="CHEBI:16845"/>
        <dbReference type="ChEBI" id="CHEBI:57540"/>
        <dbReference type="ChEBI" id="CHEBI:57945"/>
        <dbReference type="ChEBI" id="CHEBI:67139"/>
        <dbReference type="EC" id="1.17.1.8"/>
    </reaction>
</comment>
<comment type="catalytic activity">
    <reaction evidence="1">
        <text>(S)-2,3,4,5-tetrahydrodipicolinate + NADP(+) + H2O = (2S,4S)-4-hydroxy-2,3,4,5-tetrahydrodipicolinate + NADPH + H(+)</text>
        <dbReference type="Rhea" id="RHEA:35331"/>
        <dbReference type="ChEBI" id="CHEBI:15377"/>
        <dbReference type="ChEBI" id="CHEBI:15378"/>
        <dbReference type="ChEBI" id="CHEBI:16845"/>
        <dbReference type="ChEBI" id="CHEBI:57783"/>
        <dbReference type="ChEBI" id="CHEBI:58349"/>
        <dbReference type="ChEBI" id="CHEBI:67139"/>
        <dbReference type="EC" id="1.17.1.8"/>
    </reaction>
</comment>
<comment type="pathway">
    <text evidence="1">Amino-acid biosynthesis; L-lysine biosynthesis via DAP pathway; (S)-tetrahydrodipicolinate from L-aspartate: step 4/4.</text>
</comment>
<comment type="subunit">
    <text evidence="1">Homotetramer.</text>
</comment>
<comment type="subcellular location">
    <subcellularLocation>
        <location evidence="1">Cytoplasm</location>
    </subcellularLocation>
</comment>
<comment type="similarity">
    <text evidence="1">Belongs to the DapB family.</text>
</comment>
<comment type="caution">
    <text evidence="2">Was originally thought to be a dihydrodipicolinate reductase (DHDPR), catalyzing the conversion of dihydrodipicolinate to tetrahydrodipicolinate. However, it was shown in E.coli that the substrate of the enzymatic reaction is not dihydrodipicolinate (DHDP) but in fact (2S,4S)-4-hydroxy-2,3,4,5-tetrahydrodipicolinic acid (HTPA), the product released by the DapA-catalyzed reaction.</text>
</comment>
<sequence length="273" mass="28863">MHEAQIRVAIAGAGGRMGRQLIQAAMAMEGVQLGAALEREGSSLLGSDAGELAGGGKSGVIVQSSLEAVKDDFDVFIDFTRPEGTLTHLAFCRQHGKGMVIGTTGFDDAGKQAIREASQEIAIVFAANFSVGVNVMLKLLEKAAKVMGDYSDIEIIEAHHRHKVDAPSGTALAMGEAIAGALDKNLKDCAVYSREGYTGERVPGTIGFATVRAGDIVGEHTAMFADIGERVEITHKASSRMTFANGALRSALWLKTKKNGLFDMRDVLGLDVL</sequence>
<protein>
    <recommendedName>
        <fullName evidence="1">4-hydroxy-tetrahydrodipicolinate reductase</fullName>
        <shortName evidence="1">HTPA reductase</shortName>
        <ecNumber evidence="1">1.17.1.8</ecNumber>
    </recommendedName>
</protein>
<accession>B5R1Q4</accession>
<evidence type="ECO:0000255" key="1">
    <source>
        <dbReference type="HAMAP-Rule" id="MF_00102"/>
    </source>
</evidence>
<evidence type="ECO:0000305" key="2"/>